<sequence>MKILGIETSCDDTAVSVYDSEEGLLSNVVSSQIKMHEEWGGVYPDLAAREHTKNIIPVLDRALKEASVNIKDIDGIAVTVAPGLIVSLVIGISVAKTLSWIYRKPLIPVHHIEAHIFASFITEKIDYPFIALVVSGGHTELYLIKGFEDYRYLGGTLDDAVGEAYDKVARMLGLGYPGGPVIDRLSKEGEDTVKLPRPLINDRGKNRFNFSFSGLKTAVLREIQKGVYRKEDIARSFQEAATDVLLAKTIDAMKEFNIKNVVIAGGVSANSRLREKFKEAEENHGIKAYFPPLYLCTDNGAMVAFTGYKRFKESGTTVDYSFEGKARLRMDKFVEIIRKSSVSS</sequence>
<gene>
    <name evidence="1" type="primary">tsaD</name>
    <name type="synonym">gcp</name>
    <name type="ordered locus">PERMA_0185</name>
</gene>
<name>TSAD_PERMH</name>
<dbReference type="EC" id="2.3.1.234" evidence="1"/>
<dbReference type="EMBL" id="CP001230">
    <property type="protein sequence ID" value="ACO04599.1"/>
    <property type="molecule type" value="Genomic_DNA"/>
</dbReference>
<dbReference type="RefSeq" id="WP_012676836.1">
    <property type="nucleotide sequence ID" value="NC_012440.1"/>
</dbReference>
<dbReference type="SMR" id="C0QTG9"/>
<dbReference type="STRING" id="123214.PERMA_0185"/>
<dbReference type="PaxDb" id="123214-PERMA_0185"/>
<dbReference type="KEGG" id="pmx:PERMA_0185"/>
<dbReference type="eggNOG" id="COG0533">
    <property type="taxonomic scope" value="Bacteria"/>
</dbReference>
<dbReference type="HOGENOM" id="CLU_023208_0_2_0"/>
<dbReference type="OrthoDB" id="9806197at2"/>
<dbReference type="Proteomes" id="UP000001366">
    <property type="component" value="Chromosome"/>
</dbReference>
<dbReference type="GO" id="GO:0005737">
    <property type="term" value="C:cytoplasm"/>
    <property type="evidence" value="ECO:0007669"/>
    <property type="project" value="UniProtKB-SubCell"/>
</dbReference>
<dbReference type="GO" id="GO:0005506">
    <property type="term" value="F:iron ion binding"/>
    <property type="evidence" value="ECO:0007669"/>
    <property type="project" value="UniProtKB-UniRule"/>
</dbReference>
<dbReference type="GO" id="GO:0061711">
    <property type="term" value="F:N(6)-L-threonylcarbamoyladenine synthase activity"/>
    <property type="evidence" value="ECO:0007669"/>
    <property type="project" value="UniProtKB-EC"/>
</dbReference>
<dbReference type="GO" id="GO:0002949">
    <property type="term" value="P:tRNA threonylcarbamoyladenosine modification"/>
    <property type="evidence" value="ECO:0007669"/>
    <property type="project" value="UniProtKB-UniRule"/>
</dbReference>
<dbReference type="CDD" id="cd24133">
    <property type="entry name" value="ASKHA_NBD_TsaD_bac"/>
    <property type="match status" value="1"/>
</dbReference>
<dbReference type="FunFam" id="3.30.420.40:FF:000012">
    <property type="entry name" value="tRNA N6-adenosine threonylcarbamoyltransferase"/>
    <property type="match status" value="1"/>
</dbReference>
<dbReference type="FunFam" id="3.30.420.40:FF:000040">
    <property type="entry name" value="tRNA N6-adenosine threonylcarbamoyltransferase"/>
    <property type="match status" value="1"/>
</dbReference>
<dbReference type="Gene3D" id="3.30.420.40">
    <property type="match status" value="2"/>
</dbReference>
<dbReference type="HAMAP" id="MF_01445">
    <property type="entry name" value="TsaD"/>
    <property type="match status" value="1"/>
</dbReference>
<dbReference type="InterPro" id="IPR043129">
    <property type="entry name" value="ATPase_NBD"/>
</dbReference>
<dbReference type="InterPro" id="IPR000905">
    <property type="entry name" value="Gcp-like_dom"/>
</dbReference>
<dbReference type="InterPro" id="IPR017861">
    <property type="entry name" value="KAE1/TsaD"/>
</dbReference>
<dbReference type="InterPro" id="IPR017860">
    <property type="entry name" value="Peptidase_M22_CS"/>
</dbReference>
<dbReference type="InterPro" id="IPR022450">
    <property type="entry name" value="TsaD"/>
</dbReference>
<dbReference type="NCBIfam" id="TIGR00329">
    <property type="entry name" value="gcp_kae1"/>
    <property type="match status" value="1"/>
</dbReference>
<dbReference type="NCBIfam" id="TIGR03723">
    <property type="entry name" value="T6A_TsaD_YgjD"/>
    <property type="match status" value="1"/>
</dbReference>
<dbReference type="PANTHER" id="PTHR11735">
    <property type="entry name" value="TRNA N6-ADENOSINE THREONYLCARBAMOYLTRANSFERASE"/>
    <property type="match status" value="1"/>
</dbReference>
<dbReference type="PANTHER" id="PTHR11735:SF6">
    <property type="entry name" value="TRNA N6-ADENOSINE THREONYLCARBAMOYLTRANSFERASE, MITOCHONDRIAL"/>
    <property type="match status" value="1"/>
</dbReference>
<dbReference type="Pfam" id="PF00814">
    <property type="entry name" value="TsaD"/>
    <property type="match status" value="1"/>
</dbReference>
<dbReference type="PRINTS" id="PR00789">
    <property type="entry name" value="OSIALOPTASE"/>
</dbReference>
<dbReference type="SUPFAM" id="SSF53067">
    <property type="entry name" value="Actin-like ATPase domain"/>
    <property type="match status" value="2"/>
</dbReference>
<dbReference type="PROSITE" id="PS01016">
    <property type="entry name" value="GLYCOPROTEASE"/>
    <property type="match status" value="1"/>
</dbReference>
<accession>C0QTG9</accession>
<organism>
    <name type="scientific">Persephonella marina (strain DSM 14350 / EX-H1)</name>
    <dbReference type="NCBI Taxonomy" id="123214"/>
    <lineage>
        <taxon>Bacteria</taxon>
        <taxon>Pseudomonadati</taxon>
        <taxon>Aquificota</taxon>
        <taxon>Aquificia</taxon>
        <taxon>Aquificales</taxon>
        <taxon>Hydrogenothermaceae</taxon>
        <taxon>Persephonella</taxon>
    </lineage>
</organism>
<comment type="function">
    <text evidence="1">Required for the formation of a threonylcarbamoyl group on adenosine at position 37 (t(6)A37) in tRNAs that read codons beginning with adenine. Is involved in the transfer of the threonylcarbamoyl moiety of threonylcarbamoyl-AMP (TC-AMP) to the N6 group of A37, together with TsaE and TsaB. TsaD likely plays a direct catalytic role in this reaction.</text>
</comment>
<comment type="catalytic activity">
    <reaction evidence="1">
        <text>L-threonylcarbamoyladenylate + adenosine(37) in tRNA = N(6)-L-threonylcarbamoyladenosine(37) in tRNA + AMP + H(+)</text>
        <dbReference type="Rhea" id="RHEA:37059"/>
        <dbReference type="Rhea" id="RHEA-COMP:10162"/>
        <dbReference type="Rhea" id="RHEA-COMP:10163"/>
        <dbReference type="ChEBI" id="CHEBI:15378"/>
        <dbReference type="ChEBI" id="CHEBI:73682"/>
        <dbReference type="ChEBI" id="CHEBI:74411"/>
        <dbReference type="ChEBI" id="CHEBI:74418"/>
        <dbReference type="ChEBI" id="CHEBI:456215"/>
        <dbReference type="EC" id="2.3.1.234"/>
    </reaction>
</comment>
<comment type="cofactor">
    <cofactor evidence="1">
        <name>Fe(2+)</name>
        <dbReference type="ChEBI" id="CHEBI:29033"/>
    </cofactor>
    <text evidence="1">Binds 1 Fe(2+) ion per subunit.</text>
</comment>
<comment type="subcellular location">
    <subcellularLocation>
        <location evidence="1">Cytoplasm</location>
    </subcellularLocation>
</comment>
<comment type="similarity">
    <text evidence="1">Belongs to the KAE1 / TsaD family.</text>
</comment>
<keyword id="KW-0012">Acyltransferase</keyword>
<keyword id="KW-0963">Cytoplasm</keyword>
<keyword id="KW-0408">Iron</keyword>
<keyword id="KW-0479">Metal-binding</keyword>
<keyword id="KW-1185">Reference proteome</keyword>
<keyword id="KW-0808">Transferase</keyword>
<keyword id="KW-0819">tRNA processing</keyword>
<protein>
    <recommendedName>
        <fullName evidence="1">tRNA N6-adenosine threonylcarbamoyltransferase</fullName>
        <ecNumber evidence="1">2.3.1.234</ecNumber>
    </recommendedName>
    <alternativeName>
        <fullName evidence="1">N6-L-threonylcarbamoyladenine synthase</fullName>
        <shortName evidence="1">t(6)A synthase</shortName>
    </alternativeName>
    <alternativeName>
        <fullName evidence="1">t(6)A37 threonylcarbamoyladenosine biosynthesis protein TsaD</fullName>
    </alternativeName>
    <alternativeName>
        <fullName evidence="1">tRNA threonylcarbamoyladenosine biosynthesis protein TsaD</fullName>
    </alternativeName>
</protein>
<feature type="chain" id="PRO_1000184975" description="tRNA N6-adenosine threonylcarbamoyltransferase">
    <location>
        <begin position="1"/>
        <end position="344"/>
    </location>
</feature>
<feature type="binding site" evidence="1">
    <location>
        <position position="111"/>
    </location>
    <ligand>
        <name>Fe cation</name>
        <dbReference type="ChEBI" id="CHEBI:24875"/>
    </ligand>
</feature>
<feature type="binding site" evidence="1">
    <location>
        <position position="115"/>
    </location>
    <ligand>
        <name>Fe cation</name>
        <dbReference type="ChEBI" id="CHEBI:24875"/>
    </ligand>
</feature>
<feature type="binding site" evidence="1">
    <location>
        <begin position="133"/>
        <end position="137"/>
    </location>
    <ligand>
        <name>substrate</name>
    </ligand>
</feature>
<feature type="binding site" evidence="1">
    <location>
        <position position="166"/>
    </location>
    <ligand>
        <name>substrate</name>
    </ligand>
</feature>
<feature type="binding site" evidence="1">
    <location>
        <position position="179"/>
    </location>
    <ligand>
        <name>substrate</name>
    </ligand>
</feature>
<feature type="binding site" evidence="1">
    <location>
        <position position="183"/>
    </location>
    <ligand>
        <name>substrate</name>
    </ligand>
</feature>
<feature type="binding site" evidence="1">
    <location>
        <position position="270"/>
    </location>
    <ligand>
        <name>substrate</name>
    </ligand>
</feature>
<feature type="binding site" evidence="1">
    <location>
        <position position="298"/>
    </location>
    <ligand>
        <name>Fe cation</name>
        <dbReference type="ChEBI" id="CHEBI:24875"/>
    </ligand>
</feature>
<proteinExistence type="inferred from homology"/>
<evidence type="ECO:0000255" key="1">
    <source>
        <dbReference type="HAMAP-Rule" id="MF_01445"/>
    </source>
</evidence>
<reference key="1">
    <citation type="journal article" date="2009" name="J. Bacteriol.">
        <title>Complete and draft genome sequences of six members of the Aquificales.</title>
        <authorList>
            <person name="Reysenbach A.-L."/>
            <person name="Hamamura N."/>
            <person name="Podar M."/>
            <person name="Griffiths E."/>
            <person name="Ferreira S."/>
            <person name="Hochstein R."/>
            <person name="Heidelberg J."/>
            <person name="Johnson J."/>
            <person name="Mead D."/>
            <person name="Pohorille A."/>
            <person name="Sarmiento M."/>
            <person name="Schweighofer K."/>
            <person name="Seshadri R."/>
            <person name="Voytek M.A."/>
        </authorList>
    </citation>
    <scope>NUCLEOTIDE SEQUENCE [LARGE SCALE GENOMIC DNA]</scope>
    <source>
        <strain>DSM 14350 / EX-H1</strain>
    </source>
</reference>